<accession>Q7TPD6</accession>
<accession>B1ASP1</accession>
<feature type="chain" id="PRO_0000081491" description="Ribonucleoprotein PTB-binding 2">
    <location>
        <begin position="1"/>
        <end position="673"/>
    </location>
</feature>
<feature type="domain" description="RRM 1" evidence="1">
    <location>
        <begin position="58"/>
        <end position="129"/>
    </location>
</feature>
<feature type="domain" description="RRM 2" evidence="1">
    <location>
        <begin position="131"/>
        <end position="209"/>
    </location>
</feature>
<feature type="domain" description="RRM 3" evidence="1">
    <location>
        <begin position="220"/>
        <end position="298"/>
    </location>
</feature>
<feature type="region of interest" description="Disordered" evidence="2">
    <location>
        <begin position="1"/>
        <end position="34"/>
    </location>
</feature>
<feature type="region of interest" description="Disordered" evidence="2">
    <location>
        <begin position="481"/>
        <end position="549"/>
    </location>
</feature>
<feature type="compositionally biased region" description="Gly residues" evidence="2">
    <location>
        <begin position="1"/>
        <end position="17"/>
    </location>
</feature>
<feature type="compositionally biased region" description="Low complexity" evidence="2">
    <location>
        <begin position="18"/>
        <end position="29"/>
    </location>
</feature>
<feature type="compositionally biased region" description="Low complexity" evidence="2">
    <location>
        <begin position="499"/>
        <end position="512"/>
    </location>
</feature>
<feature type="compositionally biased region" description="Polar residues" evidence="2">
    <location>
        <begin position="529"/>
        <end position="549"/>
    </location>
</feature>
<reference key="1">
    <citation type="journal article" date="2009" name="PLoS Biol.">
        <title>Lineage-specific biology revealed by a finished genome assembly of the mouse.</title>
        <authorList>
            <person name="Church D.M."/>
            <person name="Goodstadt L."/>
            <person name="Hillier L.W."/>
            <person name="Zody M.C."/>
            <person name="Goldstein S."/>
            <person name="She X."/>
            <person name="Bult C.J."/>
            <person name="Agarwala R."/>
            <person name="Cherry J.L."/>
            <person name="DiCuccio M."/>
            <person name="Hlavina W."/>
            <person name="Kapustin Y."/>
            <person name="Meric P."/>
            <person name="Maglott D."/>
            <person name="Birtle Z."/>
            <person name="Marques A.C."/>
            <person name="Graves T."/>
            <person name="Zhou S."/>
            <person name="Teague B."/>
            <person name="Potamousis K."/>
            <person name="Churas C."/>
            <person name="Place M."/>
            <person name="Herschleb J."/>
            <person name="Runnheim R."/>
            <person name="Forrest D."/>
            <person name="Amos-Landgraf J."/>
            <person name="Schwartz D.C."/>
            <person name="Cheng Z."/>
            <person name="Lindblad-Toh K."/>
            <person name="Eichler E.E."/>
            <person name="Ponting C.P."/>
        </authorList>
    </citation>
    <scope>NUCLEOTIDE SEQUENCE [LARGE SCALE GENOMIC DNA]</scope>
    <source>
        <strain>C57BL/6J</strain>
    </source>
</reference>
<reference key="2">
    <citation type="journal article" date="2004" name="Genome Res.">
        <title>The status, quality, and expansion of the NIH full-length cDNA project: the Mammalian Gene Collection (MGC).</title>
        <authorList>
            <consortium name="The MGC Project Team"/>
        </authorList>
    </citation>
    <scope>NUCLEOTIDE SEQUENCE [LARGE SCALE MRNA]</scope>
    <source>
        <strain>C57BL/6J</strain>
        <tissue>Brain</tissue>
    </source>
</reference>
<reference key="3">
    <citation type="journal article" date="2005" name="FEBS Lett.">
        <title>Raver2, a new member of the hnRNP family.</title>
        <authorList>
            <person name="Kleinhenz B."/>
            <person name="Fabienke M."/>
            <person name="Swiniarski S."/>
            <person name="Wittenmayer N."/>
            <person name="Kirsch J."/>
            <person name="Jockusch B.M."/>
            <person name="Arnold H.H."/>
            <person name="Illenberger S."/>
        </authorList>
    </citation>
    <scope>SUBCELLULAR LOCATION</scope>
    <scope>INTERACTION WITH RAVER1 AND PTBP1</scope>
    <scope>TISSUE SPECIFICITY</scope>
</reference>
<name>RAVR2_MOUSE</name>
<comment type="function">
    <text evidence="4">May bind single-stranded nucleic acids.</text>
</comment>
<comment type="subunit">
    <text evidence="3">Interacts with PTBP1 and RAVER1.</text>
</comment>
<comment type="subcellular location">
    <subcellularLocation>
        <location evidence="3">Nucleus</location>
    </subcellularLocation>
    <subcellularLocation>
        <location evidence="3">Cytoplasm</location>
    </subcellularLocation>
    <text>May shuttle between the nucleus and the cytoplasm.</text>
</comment>
<comment type="tissue specificity">
    <text evidence="3">Expressed throughout embryogenesis. Detected at low levels in adult lung, brain and kidney, but not in the other tissues tested.</text>
</comment>
<proteinExistence type="evidence at protein level"/>
<protein>
    <recommendedName>
        <fullName>Ribonucleoprotein PTB-binding 2</fullName>
    </recommendedName>
    <alternativeName>
        <fullName>Protein raver-2</fullName>
    </alternativeName>
</protein>
<gene>
    <name type="primary">Raver2</name>
    <name type="synonym">Kiaa1579</name>
</gene>
<evidence type="ECO:0000255" key="1">
    <source>
        <dbReference type="PROSITE-ProRule" id="PRU00176"/>
    </source>
</evidence>
<evidence type="ECO:0000256" key="2">
    <source>
        <dbReference type="SAM" id="MobiDB-lite"/>
    </source>
</evidence>
<evidence type="ECO:0000269" key="3">
    <source>
    </source>
</evidence>
<evidence type="ECO:0000305" key="4"/>
<sequence length="673" mass="72031">MAARGGGAGGAGSGSGPSAGTAGEAAEPALRPGEVAALHPQEVAARLQRMRRELSNRRKILVKNLPQDSSSQEVHELLQDYELKYCYVDRNKRTAFVTLLNGEQAQSAIQRFHQFSFRGRELTVQLQPTDALLCITNLPISFTLEEFEELVRAYGNIERCFLVYSEVTGHSKGYGFVEYMKKDFAAKARLELLGRQMGASALFAQWMDVNLLASELIHSKCLCIDKLPSDYSDSEELLQLFSGIHKPVFCQLAQDEGSHGGGFAVVEYSTAEHAEEVQQVADGITIKGSQVQLSFCAPGAPGRSTLAVLIAAQRAMHSNQKGLLPEPNPVQIMKSLNNPAMLQVLLQPQLCGRAMKPVLGVAPSLSHLLSPSLPSAILHFSKAQQSSAVGNTSSLILQNLSPLPLIQQQLMKFDNAHTNNKPGLLGEPPAMVLQPALAIGPPLPLKTDLGHHGEAHKTSNLIPPQTTLAAGLGMLPFFSNQLPAGQAGPGRGTTQEKQSASVSISEASFSGSQHYLQTFPGLPAGGPLTGNQKTPQSQPKGTEVASKNQTSLLGEPPKEIRLSKNPYLNLASVLPSVCLSTAGKGMPPKTGIASNILDAISQGSESQHALEKCIAYSPSIEDYAQASSLRNEKRGSSYLISAPEGGPVELAGQHPQDTGVSYTETYLKKKRVY</sequence>
<keyword id="KW-0963">Cytoplasm</keyword>
<keyword id="KW-0539">Nucleus</keyword>
<keyword id="KW-1185">Reference proteome</keyword>
<keyword id="KW-0677">Repeat</keyword>
<keyword id="KW-0694">RNA-binding</keyword>
<dbReference type="EMBL" id="AL627251">
    <property type="status" value="NOT_ANNOTATED_CDS"/>
    <property type="molecule type" value="Genomic_DNA"/>
</dbReference>
<dbReference type="EMBL" id="BC055329">
    <property type="protein sequence ID" value="AAH55329.1"/>
    <property type="molecule type" value="mRNA"/>
</dbReference>
<dbReference type="CCDS" id="CCDS18392.1"/>
<dbReference type="RefSeq" id="NP_898845.1">
    <property type="nucleotide sequence ID" value="NM_183024.2"/>
</dbReference>
<dbReference type="SMR" id="Q7TPD6"/>
<dbReference type="BioGRID" id="232424">
    <property type="interactions" value="1"/>
</dbReference>
<dbReference type="FunCoup" id="Q7TPD6">
    <property type="interactions" value="1359"/>
</dbReference>
<dbReference type="IntAct" id="Q7TPD6">
    <property type="interactions" value="1"/>
</dbReference>
<dbReference type="MINT" id="Q7TPD6"/>
<dbReference type="STRING" id="10090.ENSMUSP00000043142"/>
<dbReference type="iPTMnet" id="Q7TPD6"/>
<dbReference type="PhosphoSitePlus" id="Q7TPD6"/>
<dbReference type="PaxDb" id="10090-ENSMUSP00000043142"/>
<dbReference type="ProteomicsDB" id="253175"/>
<dbReference type="Antibodypedia" id="51338">
    <property type="antibodies" value="61 antibodies from 14 providers"/>
</dbReference>
<dbReference type="Ensembl" id="ENSMUST00000038463.15">
    <property type="protein sequence ID" value="ENSMUSP00000043142.9"/>
    <property type="gene ID" value="ENSMUSG00000035275.15"/>
</dbReference>
<dbReference type="GeneID" id="242570"/>
<dbReference type="KEGG" id="mmu:242570"/>
<dbReference type="UCSC" id="uc008tvj.1">
    <property type="organism name" value="mouse"/>
</dbReference>
<dbReference type="AGR" id="MGI:2443623"/>
<dbReference type="CTD" id="55225"/>
<dbReference type="MGI" id="MGI:2443623">
    <property type="gene designation" value="Raver2"/>
</dbReference>
<dbReference type="VEuPathDB" id="HostDB:ENSMUSG00000035275"/>
<dbReference type="eggNOG" id="KOG0145">
    <property type="taxonomic scope" value="Eukaryota"/>
</dbReference>
<dbReference type="GeneTree" id="ENSGT00940000158648"/>
<dbReference type="HOGENOM" id="CLU_016492_2_0_1"/>
<dbReference type="InParanoid" id="Q7TPD6"/>
<dbReference type="OMA" id="TQYNQAY"/>
<dbReference type="OrthoDB" id="639027at2759"/>
<dbReference type="PhylomeDB" id="Q7TPD6"/>
<dbReference type="TreeFam" id="TF331660"/>
<dbReference type="BioGRID-ORCS" id="242570">
    <property type="hits" value="0 hits in 77 CRISPR screens"/>
</dbReference>
<dbReference type="ChiTaRS" id="Raver2">
    <property type="organism name" value="mouse"/>
</dbReference>
<dbReference type="PRO" id="PR:Q7TPD6"/>
<dbReference type="Proteomes" id="UP000000589">
    <property type="component" value="Chromosome 4"/>
</dbReference>
<dbReference type="RNAct" id="Q7TPD6">
    <property type="molecule type" value="protein"/>
</dbReference>
<dbReference type="Bgee" id="ENSMUSG00000035275">
    <property type="expression patterns" value="Expressed in humerus cartilage element and 72 other cell types or tissues"/>
</dbReference>
<dbReference type="ExpressionAtlas" id="Q7TPD6">
    <property type="expression patterns" value="baseline and differential"/>
</dbReference>
<dbReference type="GO" id="GO:0005737">
    <property type="term" value="C:cytoplasm"/>
    <property type="evidence" value="ECO:0007669"/>
    <property type="project" value="UniProtKB-SubCell"/>
</dbReference>
<dbReference type="GO" id="GO:0005634">
    <property type="term" value="C:nucleus"/>
    <property type="evidence" value="ECO:0000314"/>
    <property type="project" value="MGI"/>
</dbReference>
<dbReference type="GO" id="GO:0003723">
    <property type="term" value="F:RNA binding"/>
    <property type="evidence" value="ECO:0007669"/>
    <property type="project" value="UniProtKB-KW"/>
</dbReference>
<dbReference type="CDD" id="cd12664">
    <property type="entry name" value="RRM1_RAVER2"/>
    <property type="match status" value="1"/>
</dbReference>
<dbReference type="CDD" id="cd12666">
    <property type="entry name" value="RRM2_RAVER2"/>
    <property type="match status" value="1"/>
</dbReference>
<dbReference type="CDD" id="cd12668">
    <property type="entry name" value="RRM3_RAVER2"/>
    <property type="match status" value="1"/>
</dbReference>
<dbReference type="FunFam" id="3.30.70.330:FF:000116">
    <property type="entry name" value="Putative ribonucleoprotein PTB-binding 1"/>
    <property type="match status" value="1"/>
</dbReference>
<dbReference type="FunFam" id="3.30.70.330:FF:000125">
    <property type="entry name" value="Putative ribonucleoprotein PTB-binding 1"/>
    <property type="match status" value="1"/>
</dbReference>
<dbReference type="Gene3D" id="3.30.70.330">
    <property type="match status" value="3"/>
</dbReference>
<dbReference type="InterPro" id="IPR012677">
    <property type="entry name" value="Nucleotide-bd_a/b_plait_sf"/>
</dbReference>
<dbReference type="InterPro" id="IPR047943">
    <property type="entry name" value="RAVER2_RRM1"/>
</dbReference>
<dbReference type="InterPro" id="IPR034636">
    <property type="entry name" value="RAVER2_RRM2"/>
</dbReference>
<dbReference type="InterPro" id="IPR047942">
    <property type="entry name" value="RAVER2_RRM3"/>
</dbReference>
<dbReference type="InterPro" id="IPR035979">
    <property type="entry name" value="RBD_domain_sf"/>
</dbReference>
<dbReference type="InterPro" id="IPR000504">
    <property type="entry name" value="RRM_dom"/>
</dbReference>
<dbReference type="PANTHER" id="PTHR23189">
    <property type="entry name" value="RNA RECOGNITION MOTIF-CONTAINING"/>
    <property type="match status" value="1"/>
</dbReference>
<dbReference type="Pfam" id="PF00076">
    <property type="entry name" value="RRM_1"/>
    <property type="match status" value="3"/>
</dbReference>
<dbReference type="SMART" id="SM00360">
    <property type="entry name" value="RRM"/>
    <property type="match status" value="3"/>
</dbReference>
<dbReference type="SUPFAM" id="SSF54928">
    <property type="entry name" value="RNA-binding domain, RBD"/>
    <property type="match status" value="2"/>
</dbReference>
<dbReference type="PROSITE" id="PS50102">
    <property type="entry name" value="RRM"/>
    <property type="match status" value="3"/>
</dbReference>
<organism>
    <name type="scientific">Mus musculus</name>
    <name type="common">Mouse</name>
    <dbReference type="NCBI Taxonomy" id="10090"/>
    <lineage>
        <taxon>Eukaryota</taxon>
        <taxon>Metazoa</taxon>
        <taxon>Chordata</taxon>
        <taxon>Craniata</taxon>
        <taxon>Vertebrata</taxon>
        <taxon>Euteleostomi</taxon>
        <taxon>Mammalia</taxon>
        <taxon>Eutheria</taxon>
        <taxon>Euarchontoglires</taxon>
        <taxon>Glires</taxon>
        <taxon>Rodentia</taxon>
        <taxon>Myomorpha</taxon>
        <taxon>Muroidea</taxon>
        <taxon>Muridae</taxon>
        <taxon>Murinae</taxon>
        <taxon>Mus</taxon>
        <taxon>Mus</taxon>
    </lineage>
</organism>